<feature type="chain" id="PRO_0000192980" description="Anaerobic nitrite reductase HBII">
    <location>
        <begin position="1"/>
        <end position="160"/>
    </location>
</feature>
<feature type="domain" description="Globin" evidence="7">
    <location>
        <begin position="8"/>
        <end position="157"/>
    </location>
</feature>
<feature type="short sequence motif" description="Homodimerization" evidence="3">
    <location>
        <begin position="41"/>
        <end position="45"/>
    </location>
</feature>
<feature type="short sequence motif" description="Homodimerization" evidence="3">
    <location>
        <begin position="111"/>
        <end position="123"/>
    </location>
</feature>
<feature type="binding site" evidence="4">
    <location>
        <position position="51"/>
    </location>
    <ligand>
        <name>heme b</name>
        <dbReference type="ChEBI" id="CHEBI:60344"/>
    </ligand>
</feature>
<feature type="binding site" evidence="3">
    <location>
        <position position="65"/>
    </location>
    <ligand>
        <name>heme b</name>
        <dbReference type="ChEBI" id="CHEBI:60344"/>
    </ligand>
</feature>
<feature type="binding site" description="distal binding residue" evidence="7">
    <location>
        <position position="69"/>
    </location>
    <ligand>
        <name>heme b</name>
        <dbReference type="ChEBI" id="CHEBI:60344"/>
    </ligand>
    <ligandPart>
        <name>Fe</name>
        <dbReference type="ChEBI" id="CHEBI:18248"/>
    </ligandPart>
</feature>
<feature type="binding site" evidence="3">
    <location>
        <position position="99"/>
    </location>
    <ligand>
        <name>heme b</name>
        <dbReference type="ChEBI" id="CHEBI:60344"/>
    </ligand>
</feature>
<feature type="binding site" evidence="3">
    <location>
        <position position="103"/>
    </location>
    <ligand>
        <name>heme b</name>
        <dbReference type="ChEBI" id="CHEBI:60344"/>
    </ligand>
</feature>
<feature type="binding site" description="proximal binding residue" evidence="7">
    <location>
        <position position="104"/>
    </location>
    <ligand>
        <name>heme b</name>
        <dbReference type="ChEBI" id="CHEBI:60344"/>
    </ligand>
    <ligandPart>
        <name>Fe</name>
        <dbReference type="ChEBI" id="CHEBI:18248"/>
    </ligandPart>
</feature>
<feature type="site" description="Homodimerization" evidence="3">
    <location>
        <position position="138"/>
    </location>
</feature>
<accession>P23244</accession>
<organism>
    <name type="scientific">Casuarina glauca</name>
    <name type="common">Swamp oak</name>
    <dbReference type="NCBI Taxonomy" id="3522"/>
    <lineage>
        <taxon>Eukaryota</taxon>
        <taxon>Viridiplantae</taxon>
        <taxon>Streptophyta</taxon>
        <taxon>Embryophyta</taxon>
        <taxon>Tracheophyta</taxon>
        <taxon>Spermatophyta</taxon>
        <taxon>Magnoliopsida</taxon>
        <taxon>eudicotyledons</taxon>
        <taxon>Gunneridae</taxon>
        <taxon>Pentapetalae</taxon>
        <taxon>rosids</taxon>
        <taxon>fabids</taxon>
        <taxon>Fagales</taxon>
        <taxon>Casuarinaceae</taxon>
        <taxon>Casuarina</taxon>
    </lineage>
</organism>
<keyword id="KW-0963">Cytoplasm</keyword>
<keyword id="KW-0349">Heme</keyword>
<keyword id="KW-0408">Iron</keyword>
<keyword id="KW-0479">Metal-binding</keyword>
<keyword id="KW-0535">Nitrogen fixation</keyword>
<keyword id="KW-0539">Nucleus</keyword>
<keyword id="KW-0560">Oxidoreductase</keyword>
<keyword id="KW-0561">Oxygen transport</keyword>
<keyword id="KW-0813">Transport</keyword>
<name>HBP2_CASGL</name>
<dbReference type="EC" id="1.7.2.-" evidence="3"/>
<dbReference type="EMBL" id="X53950">
    <property type="protein sequence ID" value="CAA37898.1"/>
    <property type="molecule type" value="Genomic_DNA"/>
</dbReference>
<dbReference type="PIR" id="S13378">
    <property type="entry name" value="S13378"/>
</dbReference>
<dbReference type="SMR" id="P23244"/>
<dbReference type="GO" id="GO:0005737">
    <property type="term" value="C:cytoplasm"/>
    <property type="evidence" value="ECO:0007669"/>
    <property type="project" value="UniProtKB-SubCell"/>
</dbReference>
<dbReference type="GO" id="GO:0005634">
    <property type="term" value="C:nucleus"/>
    <property type="evidence" value="ECO:0007669"/>
    <property type="project" value="UniProtKB-SubCell"/>
</dbReference>
<dbReference type="GO" id="GO:0020037">
    <property type="term" value="F:heme binding"/>
    <property type="evidence" value="ECO:0007669"/>
    <property type="project" value="InterPro"/>
</dbReference>
<dbReference type="GO" id="GO:0046872">
    <property type="term" value="F:metal ion binding"/>
    <property type="evidence" value="ECO:0007669"/>
    <property type="project" value="UniProtKB-KW"/>
</dbReference>
<dbReference type="GO" id="GO:0016491">
    <property type="term" value="F:oxidoreductase activity"/>
    <property type="evidence" value="ECO:0007669"/>
    <property type="project" value="UniProtKB-KW"/>
</dbReference>
<dbReference type="GO" id="GO:0019825">
    <property type="term" value="F:oxygen binding"/>
    <property type="evidence" value="ECO:0007669"/>
    <property type="project" value="InterPro"/>
</dbReference>
<dbReference type="GO" id="GO:0005344">
    <property type="term" value="F:oxygen carrier activity"/>
    <property type="evidence" value="ECO:0007669"/>
    <property type="project" value="UniProtKB-KW"/>
</dbReference>
<dbReference type="CDD" id="cd14784">
    <property type="entry name" value="class1_nsHb-like"/>
    <property type="match status" value="1"/>
</dbReference>
<dbReference type="Gene3D" id="1.10.490.10">
    <property type="entry name" value="Globins"/>
    <property type="match status" value="1"/>
</dbReference>
<dbReference type="InterPro" id="IPR000971">
    <property type="entry name" value="Globin"/>
</dbReference>
<dbReference type="InterPro" id="IPR009050">
    <property type="entry name" value="Globin-like_sf"/>
</dbReference>
<dbReference type="InterPro" id="IPR012292">
    <property type="entry name" value="Globin/Proto"/>
</dbReference>
<dbReference type="InterPro" id="IPR001032">
    <property type="entry name" value="Leghaemoglobin-like"/>
</dbReference>
<dbReference type="InterPro" id="IPR019824">
    <property type="entry name" value="Leghaemoglobin_Fe_BS"/>
</dbReference>
<dbReference type="PANTHER" id="PTHR22924">
    <property type="entry name" value="LEGHEMOGLOBIN-RELATED"/>
    <property type="match status" value="1"/>
</dbReference>
<dbReference type="PANTHER" id="PTHR22924:SF39">
    <property type="entry name" value="NON-SYMBIOTIC HEMOGLOBIN 1"/>
    <property type="match status" value="1"/>
</dbReference>
<dbReference type="Pfam" id="PF00042">
    <property type="entry name" value="Globin"/>
    <property type="match status" value="1"/>
</dbReference>
<dbReference type="PRINTS" id="PR00188">
    <property type="entry name" value="PLANTGLOBIN"/>
</dbReference>
<dbReference type="SUPFAM" id="SSF46458">
    <property type="entry name" value="Globin-like"/>
    <property type="match status" value="1"/>
</dbReference>
<dbReference type="PROSITE" id="PS01033">
    <property type="entry name" value="GLOBIN"/>
    <property type="match status" value="1"/>
</dbReference>
<dbReference type="PROSITE" id="PS00208">
    <property type="entry name" value="PLANT_GLOBIN"/>
    <property type="match status" value="1"/>
</dbReference>
<gene>
    <name evidence="8" type="primary">HBII</name>
</gene>
<comment type="function">
    <text evidence="2 3 5 6">Phytoglobin that reduces nitrite to nitric oxide (NO) under anoxic conditions (e.g. during flooding or in waterlogged soil) and upon root nodulation (By similarity). Required for general plant development and during nodulation, especially for the onset of symbiosis (By similarity). Monitors nitric oxide (NO) levels during early phase of the nitrogen-fixing symbiosis and buffers oxygen in functioning nodules (By similarity). May not function as an oxygen storage or transport protein (By similarity). Has an unusually high affinity for O(2) through a hexacoordinate heme iron because of a very low dissociation constant (By similarity).</text>
</comment>
<comment type="catalytic activity">
    <reaction evidence="3">
        <text>Fe(III)-heme b-[protein] + nitric oxide + H2O = Fe(II)-heme b-[protein] + nitrite + 2 H(+)</text>
        <dbReference type="Rhea" id="RHEA:77711"/>
        <dbReference type="Rhea" id="RHEA-COMP:18975"/>
        <dbReference type="Rhea" id="RHEA-COMP:18976"/>
        <dbReference type="ChEBI" id="CHEBI:15377"/>
        <dbReference type="ChEBI" id="CHEBI:15378"/>
        <dbReference type="ChEBI" id="CHEBI:16301"/>
        <dbReference type="ChEBI" id="CHEBI:16480"/>
        <dbReference type="ChEBI" id="CHEBI:55376"/>
        <dbReference type="ChEBI" id="CHEBI:60344"/>
    </reaction>
    <physiologicalReaction direction="right-to-left" evidence="3">
        <dbReference type="Rhea" id="RHEA:77713"/>
    </physiologicalReaction>
</comment>
<comment type="cofactor">
    <cofactor evidence="4">
        <name>heme b</name>
        <dbReference type="ChEBI" id="CHEBI:60344"/>
    </cofactor>
    <text evidence="4">Binds 1 heme group per subunit.</text>
</comment>
<comment type="subunit">
    <text evidence="3">Homodimer.</text>
</comment>
<comment type="subcellular location">
    <subcellularLocation>
        <location evidence="1">Cytoplasm</location>
    </subcellularLocation>
    <subcellularLocation>
        <location evidence="1">Nucleus</location>
    </subcellularLocation>
</comment>
<comment type="similarity">
    <text evidence="9">Belongs to the plant globin family.</text>
</comment>
<sequence length="160" mass="17846">MSTLEGRGFTEEQEALVVKSWSAMKPNAGELGLKFFLKIFEIAPSAQKLFSFLKDSNVPLERNPKLKSHAMSVFLMTCESAVQLRKAGKVTVRESSLKKLGASHFKHGVADEHFEVTKFALLETIKEAVPETWSPEMKNAWGEAYDKLVAAIKLEMKPSS</sequence>
<protein>
    <recommendedName>
        <fullName evidence="3">Anaerobic nitrite reductase HBII</fullName>
        <ecNumber evidence="3">1.7.2.-</ecNumber>
    </recommendedName>
    <alternativeName>
        <fullName evidence="8">Hemoglobin II</fullName>
    </alternativeName>
    <alternativeName>
        <fullName evidence="8">Hemoglobin-2</fullName>
    </alternativeName>
</protein>
<evidence type="ECO:0000250" key="1">
    <source>
        <dbReference type="UniProtKB" id="A2XE98"/>
    </source>
</evidence>
<evidence type="ECO:0000250" key="2">
    <source>
        <dbReference type="UniProtKB" id="I3SPW2"/>
    </source>
</evidence>
<evidence type="ECO:0000250" key="3">
    <source>
        <dbReference type="UniProtKB" id="O04986"/>
    </source>
</evidence>
<evidence type="ECO:0000250" key="4">
    <source>
        <dbReference type="UniProtKB" id="P68168"/>
    </source>
</evidence>
<evidence type="ECO:0000250" key="5">
    <source>
        <dbReference type="UniProtKB" id="Q3C1F4"/>
    </source>
</evidence>
<evidence type="ECO:0000250" key="6">
    <source>
        <dbReference type="UniProtKB" id="Q42831"/>
    </source>
</evidence>
<evidence type="ECO:0000255" key="7">
    <source>
        <dbReference type="PROSITE-ProRule" id="PRU00238"/>
    </source>
</evidence>
<evidence type="ECO:0000303" key="8">
    <source>
    </source>
</evidence>
<evidence type="ECO:0000305" key="9"/>
<proteinExistence type="inferred from homology"/>
<reference key="1">
    <citation type="journal article" date="1991" name="Plant Mol. Biol.">
        <title>Hemoglobin genes in non-legumes: cloning and characterization of a Casuarina glauca hemoglobin gene.</title>
        <authorList>
            <person name="Christensen T."/>
            <person name="Dennis E.S."/>
            <person name="Peacock J.W."/>
            <person name="Landsmann J."/>
            <person name="Marcker K.A."/>
        </authorList>
    </citation>
    <scope>NUCLEOTIDE SEQUENCE [GENOMIC DNA]</scope>
</reference>